<name>HSP90_SCHPO</name>
<organism>
    <name type="scientific">Schizosaccharomyces pombe (strain 972 / ATCC 24843)</name>
    <name type="common">Fission yeast</name>
    <dbReference type="NCBI Taxonomy" id="284812"/>
    <lineage>
        <taxon>Eukaryota</taxon>
        <taxon>Fungi</taxon>
        <taxon>Dikarya</taxon>
        <taxon>Ascomycota</taxon>
        <taxon>Taphrinomycotina</taxon>
        <taxon>Schizosaccharomycetes</taxon>
        <taxon>Schizosaccharomycetales</taxon>
        <taxon>Schizosaccharomycetaceae</taxon>
        <taxon>Schizosaccharomyces</taxon>
    </lineage>
</organism>
<proteinExistence type="evidence at protein level"/>
<evidence type="ECO:0000250" key="1"/>
<evidence type="ECO:0000256" key="2">
    <source>
        <dbReference type="SAM" id="MobiDB-lite"/>
    </source>
</evidence>
<evidence type="ECO:0000269" key="3">
    <source>
    </source>
</evidence>
<evidence type="ECO:0000305" key="4"/>
<sequence length="704" mass="80596">MSNTETFKFEAEISQLMSLIINTVYSNKEIFLRELISNASDALDKIRYQSLSDPHALDAEKDLFIRITPDKENKILSIRDTGIGMTKNDLINNLGVIAKSGTKQFMEAAASGADISMIGQFGVGFYSAYLVADKVQVVSKHNDDEQYIWESSAGGSFTVTLDTDGPRLLRGTEIRLFMKEDQLQYLEEKTIKDTVKKHSEFISYPIQLVVTREVEKEVPEEEETEEVKNEEDDKAPKIEEVDDESEKKEKKTKKVKETTTETEELNKTKPIWTRNPSEVTKEEYASFYKSLTNDWEDHLAVKHFSVEGQLEFRAILFVPRRAPMDLFEAKRKKNNIKLYVRRVFITDDCEELIPEWLGFIKGVVDSEDLPLNLSREMLQQNKIMKVIRKNLVRRCLDMFNEIAEDKENFKTFYDAFSKNLKLGIHEDAANRPALAKLLRYNSLNSPDDLISLEDYITKMPEHQKNIYFITGESKQAVENSPFLEIFRAKKFDVLFMVDPIDEYAVTQLKEFEGKKLVNITKDGLELEETDEEKAAREKLEKEYEEFAKQLKTILGDKVEKVVVSNKIVGSPCLLTTGQYGWSANMERIMKAQALRDTSMSAYMSSRKTFEINPKSPIIAELKKKVEENGAEDRSVKDLATILYETALLSSGFTLDDPSAYAQRINRLISLGLSIDEEEEAPIEEISTESVAAENNAESKMEEVD</sequence>
<keyword id="KW-0067">ATP-binding</keyword>
<keyword id="KW-0143">Chaperone</keyword>
<keyword id="KW-0963">Cytoplasm</keyword>
<keyword id="KW-0547">Nucleotide-binding</keyword>
<keyword id="KW-0597">Phosphoprotein</keyword>
<keyword id="KW-1185">Reference proteome</keyword>
<comment type="function">
    <text evidence="1">Molecular chaperone that promotes the maturation, structural maintenance and proper regulation of specific target proteins involved for instance in cell cycle control and signal transduction. Undergoes a functional cycle that is linked to its ATPase activity. This cycle probably induces conformational changes in the client proteins, thereby causing their activation. Interacts dynamically with various co-chaperones that modulate its substrate recognition, ATPase cycle and chaperone function (By similarity). Interacts with the wee1 protein kinase; which requires swo1 for its activation.</text>
</comment>
<comment type="subunit">
    <text evidence="1">Homodimer.</text>
</comment>
<comment type="subcellular location">
    <subcellularLocation>
        <location evidence="1">Cytoplasm</location>
    </subcellularLocation>
</comment>
<comment type="domain">
    <text evidence="1">The TPR repeat-binding motif mediates interaction with TPR repeat-containing proteins.</text>
</comment>
<comment type="similarity">
    <text evidence="4">Belongs to the heat shock protein 90 family.</text>
</comment>
<reference key="1">
    <citation type="journal article" date="1994" name="EMBO J.">
        <title>A role for Hsp90 in cell cycle control: Wee1 tyrosine kinase activity requires interaction with Hsp90.</title>
        <authorList>
            <person name="Aligue R."/>
            <person name="Akhavan-Niaki H."/>
            <person name="Russell P."/>
        </authorList>
    </citation>
    <scope>NUCLEOTIDE SEQUENCE [GENOMIC DNA]</scope>
    <source>
        <strain>972 / ATCC 24843</strain>
    </source>
</reference>
<reference key="2">
    <citation type="journal article" date="2002" name="Nature">
        <title>The genome sequence of Schizosaccharomyces pombe.</title>
        <authorList>
            <person name="Wood V."/>
            <person name="Gwilliam R."/>
            <person name="Rajandream M.A."/>
            <person name="Lyne M.H."/>
            <person name="Lyne R."/>
            <person name="Stewart A."/>
            <person name="Sgouros J.G."/>
            <person name="Peat N."/>
            <person name="Hayles J."/>
            <person name="Baker S.G."/>
            <person name="Basham D."/>
            <person name="Bowman S."/>
            <person name="Brooks K."/>
            <person name="Brown D."/>
            <person name="Brown S."/>
            <person name="Chillingworth T."/>
            <person name="Churcher C.M."/>
            <person name="Collins M."/>
            <person name="Connor R."/>
            <person name="Cronin A."/>
            <person name="Davis P."/>
            <person name="Feltwell T."/>
            <person name="Fraser A."/>
            <person name="Gentles S."/>
            <person name="Goble A."/>
            <person name="Hamlin N."/>
            <person name="Harris D.E."/>
            <person name="Hidalgo J."/>
            <person name="Hodgson G."/>
            <person name="Holroyd S."/>
            <person name="Hornsby T."/>
            <person name="Howarth S."/>
            <person name="Huckle E.J."/>
            <person name="Hunt S."/>
            <person name="Jagels K."/>
            <person name="James K.D."/>
            <person name="Jones L."/>
            <person name="Jones M."/>
            <person name="Leather S."/>
            <person name="McDonald S."/>
            <person name="McLean J."/>
            <person name="Mooney P."/>
            <person name="Moule S."/>
            <person name="Mungall K.L."/>
            <person name="Murphy L.D."/>
            <person name="Niblett D."/>
            <person name="Odell C."/>
            <person name="Oliver K."/>
            <person name="O'Neil S."/>
            <person name="Pearson D."/>
            <person name="Quail M.A."/>
            <person name="Rabbinowitsch E."/>
            <person name="Rutherford K.M."/>
            <person name="Rutter S."/>
            <person name="Saunders D."/>
            <person name="Seeger K."/>
            <person name="Sharp S."/>
            <person name="Skelton J."/>
            <person name="Simmonds M.N."/>
            <person name="Squares R."/>
            <person name="Squares S."/>
            <person name="Stevens K."/>
            <person name="Taylor K."/>
            <person name="Taylor R.G."/>
            <person name="Tivey A."/>
            <person name="Walsh S.V."/>
            <person name="Warren T."/>
            <person name="Whitehead S."/>
            <person name="Woodward J.R."/>
            <person name="Volckaert G."/>
            <person name="Aert R."/>
            <person name="Robben J."/>
            <person name="Grymonprez B."/>
            <person name="Weltjens I."/>
            <person name="Vanstreels E."/>
            <person name="Rieger M."/>
            <person name="Schaefer M."/>
            <person name="Mueller-Auer S."/>
            <person name="Gabel C."/>
            <person name="Fuchs M."/>
            <person name="Duesterhoeft A."/>
            <person name="Fritzc C."/>
            <person name="Holzer E."/>
            <person name="Moestl D."/>
            <person name="Hilbert H."/>
            <person name="Borzym K."/>
            <person name="Langer I."/>
            <person name="Beck A."/>
            <person name="Lehrach H."/>
            <person name="Reinhardt R."/>
            <person name="Pohl T.M."/>
            <person name="Eger P."/>
            <person name="Zimmermann W."/>
            <person name="Wedler H."/>
            <person name="Wambutt R."/>
            <person name="Purnelle B."/>
            <person name="Goffeau A."/>
            <person name="Cadieu E."/>
            <person name="Dreano S."/>
            <person name="Gloux S."/>
            <person name="Lelaure V."/>
            <person name="Mottier S."/>
            <person name="Galibert F."/>
            <person name="Aves S.J."/>
            <person name="Xiang Z."/>
            <person name="Hunt C."/>
            <person name="Moore K."/>
            <person name="Hurst S.M."/>
            <person name="Lucas M."/>
            <person name="Rochet M."/>
            <person name="Gaillardin C."/>
            <person name="Tallada V.A."/>
            <person name="Garzon A."/>
            <person name="Thode G."/>
            <person name="Daga R.R."/>
            <person name="Cruzado L."/>
            <person name="Jimenez J."/>
            <person name="Sanchez M."/>
            <person name="del Rey F."/>
            <person name="Benito J."/>
            <person name="Dominguez A."/>
            <person name="Revuelta J.L."/>
            <person name="Moreno S."/>
            <person name="Armstrong J."/>
            <person name="Forsburg S.L."/>
            <person name="Cerutti L."/>
            <person name="Lowe T."/>
            <person name="McCombie W.R."/>
            <person name="Paulsen I."/>
            <person name="Potashkin J."/>
            <person name="Shpakovski G.V."/>
            <person name="Ussery D."/>
            <person name="Barrell B.G."/>
            <person name="Nurse P."/>
        </authorList>
    </citation>
    <scope>NUCLEOTIDE SEQUENCE [LARGE SCALE GENOMIC DNA]</scope>
    <source>
        <strain>972 / ATCC 24843</strain>
    </source>
</reference>
<reference key="3">
    <citation type="journal article" date="2008" name="J. Proteome Res.">
        <title>Phosphoproteome analysis of fission yeast.</title>
        <authorList>
            <person name="Wilson-Grady J.T."/>
            <person name="Villen J."/>
            <person name="Gygi S.P."/>
        </authorList>
    </citation>
    <scope>PHOSPHORYLATION [LARGE SCALE ANALYSIS] AT SER-245; SER-277 AND SER-286</scope>
    <scope>IDENTIFICATION BY MASS SPECTROMETRY</scope>
</reference>
<dbReference type="EMBL" id="L35550">
    <property type="protein sequence ID" value="AAC41646.1"/>
    <property type="molecule type" value="Genomic_DNA"/>
</dbReference>
<dbReference type="EMBL" id="CU329670">
    <property type="protein sequence ID" value="CAB54152.1"/>
    <property type="molecule type" value="Genomic_DNA"/>
</dbReference>
<dbReference type="PIR" id="S51795">
    <property type="entry name" value="S51795"/>
</dbReference>
<dbReference type="PIR" id="T39202">
    <property type="entry name" value="T39202"/>
</dbReference>
<dbReference type="RefSeq" id="NP_594365.1">
    <property type="nucleotide sequence ID" value="NM_001019786.2"/>
</dbReference>
<dbReference type="SMR" id="P41887"/>
<dbReference type="BioGRID" id="279956">
    <property type="interactions" value="31"/>
</dbReference>
<dbReference type="FunCoup" id="P41887">
    <property type="interactions" value="496"/>
</dbReference>
<dbReference type="IntAct" id="P41887">
    <property type="interactions" value="1"/>
</dbReference>
<dbReference type="STRING" id="284812.P41887"/>
<dbReference type="iPTMnet" id="P41887"/>
<dbReference type="PaxDb" id="4896-SPAC926.04c.1"/>
<dbReference type="EnsemblFungi" id="SPAC926.04c.1">
    <property type="protein sequence ID" value="SPAC926.04c.1:pep"/>
    <property type="gene ID" value="SPAC926.04c"/>
</dbReference>
<dbReference type="GeneID" id="2543539"/>
<dbReference type="KEGG" id="spo:2543539"/>
<dbReference type="PomBase" id="SPAC926.04c"/>
<dbReference type="VEuPathDB" id="FungiDB:SPAC926.04c"/>
<dbReference type="eggNOG" id="KOG0019">
    <property type="taxonomic scope" value="Eukaryota"/>
</dbReference>
<dbReference type="HOGENOM" id="CLU_006684_1_3_1"/>
<dbReference type="InParanoid" id="P41887"/>
<dbReference type="OMA" id="MRRMKEM"/>
<dbReference type="PhylomeDB" id="P41887"/>
<dbReference type="Reactome" id="R-SPO-1474151">
    <property type="pathway name" value="Tetrahydrobiopterin (BH4) synthesis, recycling, salvage and regulation"/>
</dbReference>
<dbReference type="Reactome" id="R-SPO-203615">
    <property type="pathway name" value="eNOS activation"/>
</dbReference>
<dbReference type="Reactome" id="R-SPO-3371497">
    <property type="pathway name" value="HSP90 chaperone cycle for steroid hormone receptors (SHR) in the presence of ligand"/>
</dbReference>
<dbReference type="Reactome" id="R-SPO-3371511">
    <property type="pathway name" value="HSF1 activation"/>
</dbReference>
<dbReference type="Reactome" id="R-SPO-3371571">
    <property type="pathway name" value="HSF1-dependent transactivation"/>
</dbReference>
<dbReference type="Reactome" id="R-SPO-5218920">
    <property type="pathway name" value="VEGFR2 mediated vascular permeability"/>
</dbReference>
<dbReference type="Reactome" id="R-SPO-6798695">
    <property type="pathway name" value="Neutrophil degranulation"/>
</dbReference>
<dbReference type="Reactome" id="R-SPO-844456">
    <property type="pathway name" value="The NLRP3 inflammasome"/>
</dbReference>
<dbReference type="Reactome" id="R-SPO-9009391">
    <property type="pathway name" value="Extra-nuclear estrogen signaling"/>
</dbReference>
<dbReference type="PRO" id="PR:P41887"/>
<dbReference type="Proteomes" id="UP000002485">
    <property type="component" value="Chromosome I"/>
</dbReference>
<dbReference type="GO" id="GO:0005829">
    <property type="term" value="C:cytosol"/>
    <property type="evidence" value="ECO:0007005"/>
    <property type="project" value="PomBase"/>
</dbReference>
<dbReference type="GO" id="GO:0005739">
    <property type="term" value="C:mitochondrion"/>
    <property type="evidence" value="ECO:0000266"/>
    <property type="project" value="PomBase"/>
</dbReference>
<dbReference type="GO" id="GO:0048471">
    <property type="term" value="C:perinuclear region of cytoplasm"/>
    <property type="evidence" value="ECO:0000318"/>
    <property type="project" value="GO_Central"/>
</dbReference>
<dbReference type="GO" id="GO:0005886">
    <property type="term" value="C:plasma membrane"/>
    <property type="evidence" value="ECO:0000318"/>
    <property type="project" value="GO_Central"/>
</dbReference>
<dbReference type="GO" id="GO:0140453">
    <property type="term" value="C:protein aggregate center"/>
    <property type="evidence" value="ECO:0000314"/>
    <property type="project" value="PomBase"/>
</dbReference>
<dbReference type="GO" id="GO:0032991">
    <property type="term" value="C:protein-containing complex"/>
    <property type="evidence" value="ECO:0000318"/>
    <property type="project" value="GO_Central"/>
</dbReference>
<dbReference type="GO" id="GO:0005524">
    <property type="term" value="F:ATP binding"/>
    <property type="evidence" value="ECO:0000314"/>
    <property type="project" value="PomBase"/>
</dbReference>
<dbReference type="GO" id="GO:0016887">
    <property type="term" value="F:ATP hydrolysis activity"/>
    <property type="evidence" value="ECO:0000314"/>
    <property type="project" value="CACAO"/>
</dbReference>
<dbReference type="GO" id="GO:0140662">
    <property type="term" value="F:ATP-dependent protein folding chaperone"/>
    <property type="evidence" value="ECO:0000269"/>
    <property type="project" value="PomBase"/>
</dbReference>
<dbReference type="GO" id="GO:0044183">
    <property type="term" value="F:protein folding chaperone"/>
    <property type="evidence" value="ECO:0000269"/>
    <property type="project" value="PomBase"/>
</dbReference>
<dbReference type="GO" id="GO:0051082">
    <property type="term" value="F:unfolded protein binding"/>
    <property type="evidence" value="ECO:0000314"/>
    <property type="project" value="PomBase"/>
</dbReference>
<dbReference type="GO" id="GO:0051083">
    <property type="term" value="P:'de novo' cotranslational protein folding"/>
    <property type="evidence" value="ECO:0000304"/>
    <property type="project" value="PomBase"/>
</dbReference>
<dbReference type="GO" id="GO:0034605">
    <property type="term" value="P:cellular response to heat"/>
    <property type="evidence" value="ECO:0000318"/>
    <property type="project" value="GO_Central"/>
</dbReference>
<dbReference type="GO" id="GO:0061077">
    <property type="term" value="P:chaperone-mediated protein folding"/>
    <property type="evidence" value="ECO:0000314"/>
    <property type="project" value="CACAO"/>
</dbReference>
<dbReference type="GO" id="GO:0006457">
    <property type="term" value="P:protein folding"/>
    <property type="evidence" value="ECO:0000314"/>
    <property type="project" value="PomBase"/>
</dbReference>
<dbReference type="GO" id="GO:0050821">
    <property type="term" value="P:protein stabilization"/>
    <property type="evidence" value="ECO:0000318"/>
    <property type="project" value="GO_Central"/>
</dbReference>
<dbReference type="CDD" id="cd16927">
    <property type="entry name" value="HATPase_Hsp90-like"/>
    <property type="match status" value="1"/>
</dbReference>
<dbReference type="FunFam" id="1.20.120.790:FF:000001">
    <property type="entry name" value="Heat shock protein 90 alpha"/>
    <property type="match status" value="1"/>
</dbReference>
<dbReference type="FunFam" id="3.30.230.80:FF:000001">
    <property type="entry name" value="Heat shock protein 90 alpha"/>
    <property type="match status" value="1"/>
</dbReference>
<dbReference type="FunFam" id="3.40.50.11260:FF:000001">
    <property type="entry name" value="Heat shock protein 90 alpha"/>
    <property type="match status" value="1"/>
</dbReference>
<dbReference type="FunFam" id="3.30.565.10:FF:000001">
    <property type="entry name" value="Heat shock protein HSP 90-alpha"/>
    <property type="match status" value="1"/>
</dbReference>
<dbReference type="Gene3D" id="3.30.230.80">
    <property type="match status" value="1"/>
</dbReference>
<dbReference type="Gene3D" id="3.40.50.11260">
    <property type="match status" value="1"/>
</dbReference>
<dbReference type="Gene3D" id="1.20.120.790">
    <property type="entry name" value="Heat shock protein 90, C-terminal domain"/>
    <property type="match status" value="1"/>
</dbReference>
<dbReference type="Gene3D" id="3.30.565.10">
    <property type="entry name" value="Histidine kinase-like ATPase, C-terminal domain"/>
    <property type="match status" value="1"/>
</dbReference>
<dbReference type="HAMAP" id="MF_00505">
    <property type="entry name" value="HSP90"/>
    <property type="match status" value="1"/>
</dbReference>
<dbReference type="InterPro" id="IPR036890">
    <property type="entry name" value="HATPase_C_sf"/>
</dbReference>
<dbReference type="InterPro" id="IPR019805">
    <property type="entry name" value="Heat_shock_protein_90_CS"/>
</dbReference>
<dbReference type="InterPro" id="IPR037196">
    <property type="entry name" value="HSP90_C"/>
</dbReference>
<dbReference type="InterPro" id="IPR001404">
    <property type="entry name" value="Hsp90_fam"/>
</dbReference>
<dbReference type="InterPro" id="IPR020575">
    <property type="entry name" value="Hsp90_N"/>
</dbReference>
<dbReference type="InterPro" id="IPR020568">
    <property type="entry name" value="Ribosomal_Su5_D2-typ_SF"/>
</dbReference>
<dbReference type="NCBIfam" id="NF003555">
    <property type="entry name" value="PRK05218.1"/>
    <property type="match status" value="1"/>
</dbReference>
<dbReference type="PANTHER" id="PTHR11528">
    <property type="entry name" value="HEAT SHOCK PROTEIN 90 FAMILY MEMBER"/>
    <property type="match status" value="1"/>
</dbReference>
<dbReference type="Pfam" id="PF13589">
    <property type="entry name" value="HATPase_c_3"/>
    <property type="match status" value="1"/>
</dbReference>
<dbReference type="Pfam" id="PF00183">
    <property type="entry name" value="HSP90"/>
    <property type="match status" value="1"/>
</dbReference>
<dbReference type="PIRSF" id="PIRSF002583">
    <property type="entry name" value="Hsp90"/>
    <property type="match status" value="1"/>
</dbReference>
<dbReference type="PRINTS" id="PR00775">
    <property type="entry name" value="HEATSHOCK90"/>
</dbReference>
<dbReference type="SMART" id="SM00387">
    <property type="entry name" value="HATPase_c"/>
    <property type="match status" value="1"/>
</dbReference>
<dbReference type="SUPFAM" id="SSF55874">
    <property type="entry name" value="ATPase domain of HSP90 chaperone/DNA topoisomerase II/histidine kinase"/>
    <property type="match status" value="1"/>
</dbReference>
<dbReference type="SUPFAM" id="SSF110942">
    <property type="entry name" value="HSP90 C-terminal domain"/>
    <property type="match status" value="1"/>
</dbReference>
<dbReference type="SUPFAM" id="SSF54211">
    <property type="entry name" value="Ribosomal protein S5 domain 2-like"/>
    <property type="match status" value="1"/>
</dbReference>
<dbReference type="PROSITE" id="PS00298">
    <property type="entry name" value="HSP90"/>
    <property type="match status" value="1"/>
</dbReference>
<feature type="chain" id="PRO_0000062963" description="Heat shock protein 90 homolog">
    <location>
        <begin position="1"/>
        <end position="704"/>
    </location>
</feature>
<feature type="region of interest" description="Disordered" evidence="2">
    <location>
        <begin position="213"/>
        <end position="262"/>
    </location>
</feature>
<feature type="region of interest" description="Disordered" evidence="2">
    <location>
        <begin position="678"/>
        <end position="704"/>
    </location>
</feature>
<feature type="short sequence motif" description="TPR repeat-binding">
    <location>
        <begin position="700"/>
        <end position="704"/>
    </location>
</feature>
<feature type="compositionally biased region" description="Acidic residues" evidence="2">
    <location>
        <begin position="218"/>
        <end position="233"/>
    </location>
</feature>
<feature type="compositionally biased region" description="Basic and acidic residues" evidence="2">
    <location>
        <begin position="234"/>
        <end position="262"/>
    </location>
</feature>
<feature type="binding site" evidence="1">
    <location>
        <position position="38"/>
    </location>
    <ligand>
        <name>ATP</name>
        <dbReference type="ChEBI" id="CHEBI:30616"/>
    </ligand>
</feature>
<feature type="binding site" evidence="1">
    <location>
        <position position="80"/>
    </location>
    <ligand>
        <name>ATP</name>
        <dbReference type="ChEBI" id="CHEBI:30616"/>
    </ligand>
</feature>
<feature type="binding site" evidence="1">
    <location>
        <position position="99"/>
    </location>
    <ligand>
        <name>ATP</name>
        <dbReference type="ChEBI" id="CHEBI:30616"/>
    </ligand>
</feature>
<feature type="binding site" evidence="1">
    <location>
        <position position="125"/>
    </location>
    <ligand>
        <name>ATP</name>
        <dbReference type="ChEBI" id="CHEBI:30616"/>
    </ligand>
</feature>
<feature type="binding site" evidence="1">
    <location>
        <position position="375"/>
    </location>
    <ligand>
        <name>ATP</name>
        <dbReference type="ChEBI" id="CHEBI:30616"/>
    </ligand>
</feature>
<feature type="modified residue" description="Phosphoserine" evidence="3">
    <location>
        <position position="245"/>
    </location>
</feature>
<feature type="modified residue" description="Phosphoserine" evidence="3">
    <location>
        <position position="277"/>
    </location>
</feature>
<feature type="modified residue" description="Phosphoserine" evidence="3">
    <location>
        <position position="286"/>
    </location>
</feature>
<feature type="sequence conflict" description="In Ref. 1; AAC41646." evidence="4" ref="1">
    <original>EA</original>
    <variation>DW</variation>
    <location>
        <begin position="10"/>
        <end position="11"/>
    </location>
</feature>
<feature type="sequence conflict" description="In Ref. 1; AAC41646." evidence="4" ref="1">
    <original>S</original>
    <variation>T</variation>
    <location>
        <position position="77"/>
    </location>
</feature>
<feature type="sequence conflict" description="In Ref. 1; AAC41646." evidence="4" ref="1">
    <original>AQAL</original>
    <variation>LKPS</variation>
    <location>
        <begin position="591"/>
        <end position="594"/>
    </location>
</feature>
<feature type="sequence conflict" description="In Ref. 1; AAC41646." evidence="4" ref="1">
    <original>D</original>
    <variation>H</variation>
    <location>
        <position position="655"/>
    </location>
</feature>
<gene>
    <name type="primary">swo1</name>
    <name type="synonym">hsp90</name>
    <name type="ORF">SPAC926.04c</name>
</gene>
<accession>P41887</accession>
<accession>Q9UUG4</accession>
<protein>
    <recommendedName>
        <fullName>Heat shock protein 90 homolog</fullName>
    </recommendedName>
</protein>